<comment type="similarity">
    <text evidence="1">Belongs to the bacterial ribosomal protein bL34 family.</text>
</comment>
<dbReference type="EMBL" id="CP000721">
    <property type="protein sequence ID" value="ABR37210.1"/>
    <property type="molecule type" value="Genomic_DNA"/>
</dbReference>
<dbReference type="RefSeq" id="WP_008419045.1">
    <property type="nucleotide sequence ID" value="NC_009617.1"/>
</dbReference>
<dbReference type="SMR" id="A6M3N0"/>
<dbReference type="GeneID" id="66342858"/>
<dbReference type="KEGG" id="cbe:Cbei_5104"/>
<dbReference type="eggNOG" id="COG0230">
    <property type="taxonomic scope" value="Bacteria"/>
</dbReference>
<dbReference type="HOGENOM" id="CLU_129938_2_0_9"/>
<dbReference type="Proteomes" id="UP000000565">
    <property type="component" value="Chromosome"/>
</dbReference>
<dbReference type="GO" id="GO:1990904">
    <property type="term" value="C:ribonucleoprotein complex"/>
    <property type="evidence" value="ECO:0007669"/>
    <property type="project" value="UniProtKB-KW"/>
</dbReference>
<dbReference type="GO" id="GO:0005840">
    <property type="term" value="C:ribosome"/>
    <property type="evidence" value="ECO:0007669"/>
    <property type="project" value="UniProtKB-KW"/>
</dbReference>
<dbReference type="GO" id="GO:0003735">
    <property type="term" value="F:structural constituent of ribosome"/>
    <property type="evidence" value="ECO:0007669"/>
    <property type="project" value="InterPro"/>
</dbReference>
<dbReference type="GO" id="GO:0006412">
    <property type="term" value="P:translation"/>
    <property type="evidence" value="ECO:0007669"/>
    <property type="project" value="UniProtKB-UniRule"/>
</dbReference>
<dbReference type="FunFam" id="1.10.287.3980:FF:000001">
    <property type="entry name" value="Mitochondrial ribosomal protein L34"/>
    <property type="match status" value="1"/>
</dbReference>
<dbReference type="Gene3D" id="1.10.287.3980">
    <property type="match status" value="1"/>
</dbReference>
<dbReference type="HAMAP" id="MF_00391">
    <property type="entry name" value="Ribosomal_bL34"/>
    <property type="match status" value="1"/>
</dbReference>
<dbReference type="InterPro" id="IPR000271">
    <property type="entry name" value="Ribosomal_bL34"/>
</dbReference>
<dbReference type="InterPro" id="IPR020939">
    <property type="entry name" value="Ribosomal_bL34_CS"/>
</dbReference>
<dbReference type="NCBIfam" id="TIGR01030">
    <property type="entry name" value="rpmH_bact"/>
    <property type="match status" value="1"/>
</dbReference>
<dbReference type="PANTHER" id="PTHR14503:SF4">
    <property type="entry name" value="LARGE RIBOSOMAL SUBUNIT PROTEIN BL34M"/>
    <property type="match status" value="1"/>
</dbReference>
<dbReference type="PANTHER" id="PTHR14503">
    <property type="entry name" value="MITOCHONDRIAL RIBOSOMAL PROTEIN 34 FAMILY MEMBER"/>
    <property type="match status" value="1"/>
</dbReference>
<dbReference type="Pfam" id="PF00468">
    <property type="entry name" value="Ribosomal_L34"/>
    <property type="match status" value="1"/>
</dbReference>
<dbReference type="PROSITE" id="PS00784">
    <property type="entry name" value="RIBOSOMAL_L34"/>
    <property type="match status" value="1"/>
</dbReference>
<accession>A6M3N0</accession>
<gene>
    <name evidence="1" type="primary">rpmH</name>
    <name type="ordered locus">Cbei_5104</name>
</gene>
<evidence type="ECO:0000255" key="1">
    <source>
        <dbReference type="HAMAP-Rule" id="MF_00391"/>
    </source>
</evidence>
<evidence type="ECO:0000256" key="2">
    <source>
        <dbReference type="SAM" id="MobiDB-lite"/>
    </source>
</evidence>
<evidence type="ECO:0000305" key="3"/>
<organism>
    <name type="scientific">Clostridium beijerinckii (strain ATCC 51743 / NCIMB 8052)</name>
    <name type="common">Clostridium acetobutylicum</name>
    <dbReference type="NCBI Taxonomy" id="290402"/>
    <lineage>
        <taxon>Bacteria</taxon>
        <taxon>Bacillati</taxon>
        <taxon>Bacillota</taxon>
        <taxon>Clostridia</taxon>
        <taxon>Eubacteriales</taxon>
        <taxon>Clostridiaceae</taxon>
        <taxon>Clostridium</taxon>
    </lineage>
</organism>
<keyword id="KW-0687">Ribonucleoprotein</keyword>
<keyword id="KW-0689">Ribosomal protein</keyword>
<feature type="chain" id="PRO_1000080244" description="Large ribosomal subunit protein bL34">
    <location>
        <begin position="1"/>
        <end position="44"/>
    </location>
</feature>
<feature type="region of interest" description="Disordered" evidence="2">
    <location>
        <begin position="1"/>
        <end position="44"/>
    </location>
</feature>
<feature type="compositionally biased region" description="Basic residues" evidence="2">
    <location>
        <begin position="7"/>
        <end position="22"/>
    </location>
</feature>
<feature type="compositionally biased region" description="Basic residues" evidence="2">
    <location>
        <begin position="31"/>
        <end position="44"/>
    </location>
</feature>
<name>RL34_CLOB8</name>
<reference key="1">
    <citation type="submission" date="2007-06" db="EMBL/GenBank/DDBJ databases">
        <title>Complete sequence of Clostridium beijerinckii NCIMB 8052.</title>
        <authorList>
            <consortium name="US DOE Joint Genome Institute"/>
            <person name="Copeland A."/>
            <person name="Lucas S."/>
            <person name="Lapidus A."/>
            <person name="Barry K."/>
            <person name="Detter J.C."/>
            <person name="Glavina del Rio T."/>
            <person name="Hammon N."/>
            <person name="Israni S."/>
            <person name="Dalin E."/>
            <person name="Tice H."/>
            <person name="Pitluck S."/>
            <person name="Sims D."/>
            <person name="Brettin T."/>
            <person name="Bruce D."/>
            <person name="Tapia R."/>
            <person name="Brainard J."/>
            <person name="Schmutz J."/>
            <person name="Larimer F."/>
            <person name="Land M."/>
            <person name="Hauser L."/>
            <person name="Kyrpides N."/>
            <person name="Mikhailova N."/>
            <person name="Bennet G."/>
            <person name="Cann I."/>
            <person name="Chen J.-S."/>
            <person name="Contreras A.L."/>
            <person name="Jones D."/>
            <person name="Kashket E."/>
            <person name="Mitchell W."/>
            <person name="Stoddard S."/>
            <person name="Schwarz W."/>
            <person name="Qureshi N."/>
            <person name="Young M."/>
            <person name="Shi Z."/>
            <person name="Ezeji T."/>
            <person name="White B."/>
            <person name="Blaschek H."/>
            <person name="Richardson P."/>
        </authorList>
    </citation>
    <scope>NUCLEOTIDE SEQUENCE [LARGE SCALE GENOMIC DNA]</scope>
    <source>
        <strain>ATCC 51743 / NCIMB 8052</strain>
    </source>
</reference>
<protein>
    <recommendedName>
        <fullName evidence="1">Large ribosomal subunit protein bL34</fullName>
    </recommendedName>
    <alternativeName>
        <fullName evidence="3">50S ribosomal protein L34</fullName>
    </alternativeName>
</protein>
<sequence length="44" mass="5408">MFMTYQPKKRQRKKEHGFRKRMSTQSGRNILKSRRQKGRKKLTA</sequence>
<proteinExistence type="inferred from homology"/>